<name>TRPD_STAS1</name>
<accession>Q49XH5</accession>
<reference key="1">
    <citation type="journal article" date="2005" name="Proc. Natl. Acad. Sci. U.S.A.">
        <title>Whole genome sequence of Staphylococcus saprophyticus reveals the pathogenesis of uncomplicated urinary tract infection.</title>
        <authorList>
            <person name="Kuroda M."/>
            <person name="Yamashita A."/>
            <person name="Hirakawa H."/>
            <person name="Kumano M."/>
            <person name="Morikawa K."/>
            <person name="Higashide M."/>
            <person name="Maruyama A."/>
            <person name="Inose Y."/>
            <person name="Matoba K."/>
            <person name="Toh H."/>
            <person name="Kuhara S."/>
            <person name="Hattori M."/>
            <person name="Ohta T."/>
        </authorList>
    </citation>
    <scope>NUCLEOTIDE SEQUENCE [LARGE SCALE GENOMIC DNA]</scope>
    <source>
        <strain>ATCC 15305 / DSM 20229 / NCIMB 8711 / NCTC 7292 / S-41</strain>
    </source>
</reference>
<keyword id="KW-0028">Amino-acid biosynthesis</keyword>
<keyword id="KW-0057">Aromatic amino acid biosynthesis</keyword>
<keyword id="KW-0328">Glycosyltransferase</keyword>
<keyword id="KW-0460">Magnesium</keyword>
<keyword id="KW-0479">Metal-binding</keyword>
<keyword id="KW-1185">Reference proteome</keyword>
<keyword id="KW-0808">Transferase</keyword>
<keyword id="KW-0822">Tryptophan biosynthesis</keyword>
<organism>
    <name type="scientific">Staphylococcus saprophyticus subsp. saprophyticus (strain ATCC 15305 / DSM 20229 / NCIMB 8711 / NCTC 7292 / S-41)</name>
    <dbReference type="NCBI Taxonomy" id="342451"/>
    <lineage>
        <taxon>Bacteria</taxon>
        <taxon>Bacillati</taxon>
        <taxon>Bacillota</taxon>
        <taxon>Bacilli</taxon>
        <taxon>Bacillales</taxon>
        <taxon>Staphylococcaceae</taxon>
        <taxon>Staphylococcus</taxon>
    </lineage>
</organism>
<protein>
    <recommendedName>
        <fullName evidence="1">Anthranilate phosphoribosyltransferase</fullName>
        <ecNumber evidence="1">2.4.2.18</ecNumber>
    </recommendedName>
</protein>
<dbReference type="EC" id="2.4.2.18" evidence="1"/>
<dbReference type="EMBL" id="AP008934">
    <property type="protein sequence ID" value="BAE18522.1"/>
    <property type="molecule type" value="Genomic_DNA"/>
</dbReference>
<dbReference type="RefSeq" id="WP_011303153.1">
    <property type="nucleotide sequence ID" value="NC_007350.1"/>
</dbReference>
<dbReference type="SMR" id="Q49XH5"/>
<dbReference type="GeneID" id="3617105"/>
<dbReference type="KEGG" id="ssp:SSP1377"/>
<dbReference type="PATRIC" id="fig|342451.11.peg.1382"/>
<dbReference type="eggNOG" id="COG0547">
    <property type="taxonomic scope" value="Bacteria"/>
</dbReference>
<dbReference type="HOGENOM" id="CLU_034315_3_0_9"/>
<dbReference type="OrthoDB" id="9806430at2"/>
<dbReference type="UniPathway" id="UPA00035">
    <property type="reaction ID" value="UER00041"/>
</dbReference>
<dbReference type="Proteomes" id="UP000006371">
    <property type="component" value="Chromosome"/>
</dbReference>
<dbReference type="GO" id="GO:0005829">
    <property type="term" value="C:cytosol"/>
    <property type="evidence" value="ECO:0007669"/>
    <property type="project" value="TreeGrafter"/>
</dbReference>
<dbReference type="GO" id="GO:0004048">
    <property type="term" value="F:anthranilate phosphoribosyltransferase activity"/>
    <property type="evidence" value="ECO:0007669"/>
    <property type="project" value="UniProtKB-UniRule"/>
</dbReference>
<dbReference type="GO" id="GO:0000287">
    <property type="term" value="F:magnesium ion binding"/>
    <property type="evidence" value="ECO:0007669"/>
    <property type="project" value="UniProtKB-UniRule"/>
</dbReference>
<dbReference type="GO" id="GO:0000162">
    <property type="term" value="P:L-tryptophan biosynthetic process"/>
    <property type="evidence" value="ECO:0007669"/>
    <property type="project" value="UniProtKB-UniRule"/>
</dbReference>
<dbReference type="Gene3D" id="3.40.1030.10">
    <property type="entry name" value="Nucleoside phosphorylase/phosphoribosyltransferase catalytic domain"/>
    <property type="match status" value="1"/>
</dbReference>
<dbReference type="Gene3D" id="1.20.970.10">
    <property type="entry name" value="Transferase, Pyrimidine Nucleoside Phosphorylase, Chain C"/>
    <property type="match status" value="1"/>
</dbReference>
<dbReference type="HAMAP" id="MF_00211">
    <property type="entry name" value="TrpD"/>
    <property type="match status" value="1"/>
</dbReference>
<dbReference type="InterPro" id="IPR005940">
    <property type="entry name" value="Anthranilate_Pribosyl_Tfrase"/>
</dbReference>
<dbReference type="InterPro" id="IPR000312">
    <property type="entry name" value="Glycosyl_Trfase_fam3"/>
</dbReference>
<dbReference type="InterPro" id="IPR035902">
    <property type="entry name" value="Nuc_phospho_transferase"/>
</dbReference>
<dbReference type="NCBIfam" id="TIGR01245">
    <property type="entry name" value="trpD"/>
    <property type="match status" value="1"/>
</dbReference>
<dbReference type="PANTHER" id="PTHR43285">
    <property type="entry name" value="ANTHRANILATE PHOSPHORIBOSYLTRANSFERASE"/>
    <property type="match status" value="1"/>
</dbReference>
<dbReference type="PANTHER" id="PTHR43285:SF2">
    <property type="entry name" value="ANTHRANILATE PHOSPHORIBOSYLTRANSFERASE"/>
    <property type="match status" value="1"/>
</dbReference>
<dbReference type="Pfam" id="PF00591">
    <property type="entry name" value="Glycos_transf_3"/>
    <property type="match status" value="1"/>
</dbReference>
<dbReference type="SUPFAM" id="SSF52418">
    <property type="entry name" value="Nucleoside phosphorylase/phosphoribosyltransferase catalytic domain"/>
    <property type="match status" value="1"/>
</dbReference>
<feature type="chain" id="PRO_0000154487" description="Anthranilate phosphoribosyltransferase">
    <location>
        <begin position="1"/>
        <end position="338"/>
    </location>
</feature>
<feature type="binding site" evidence="1">
    <location>
        <position position="78"/>
    </location>
    <ligand>
        <name>5-phospho-alpha-D-ribose 1-diphosphate</name>
        <dbReference type="ChEBI" id="CHEBI:58017"/>
    </ligand>
</feature>
<feature type="binding site" evidence="1">
    <location>
        <position position="78"/>
    </location>
    <ligand>
        <name>anthranilate</name>
        <dbReference type="ChEBI" id="CHEBI:16567"/>
        <label>1</label>
    </ligand>
</feature>
<feature type="binding site" evidence="1">
    <location>
        <begin position="81"/>
        <end position="82"/>
    </location>
    <ligand>
        <name>5-phospho-alpha-D-ribose 1-diphosphate</name>
        <dbReference type="ChEBI" id="CHEBI:58017"/>
    </ligand>
</feature>
<feature type="binding site" evidence="1">
    <location>
        <position position="86"/>
    </location>
    <ligand>
        <name>5-phospho-alpha-D-ribose 1-diphosphate</name>
        <dbReference type="ChEBI" id="CHEBI:58017"/>
    </ligand>
</feature>
<feature type="binding site" evidence="1">
    <location>
        <begin position="88"/>
        <end position="91"/>
    </location>
    <ligand>
        <name>5-phospho-alpha-D-ribose 1-diphosphate</name>
        <dbReference type="ChEBI" id="CHEBI:58017"/>
    </ligand>
</feature>
<feature type="binding site" evidence="1">
    <location>
        <position position="90"/>
    </location>
    <ligand>
        <name>Mg(2+)</name>
        <dbReference type="ChEBI" id="CHEBI:18420"/>
        <label>1</label>
    </ligand>
</feature>
<feature type="binding site" evidence="1">
    <location>
        <begin position="106"/>
        <end position="114"/>
    </location>
    <ligand>
        <name>5-phospho-alpha-D-ribose 1-diphosphate</name>
        <dbReference type="ChEBI" id="CHEBI:58017"/>
    </ligand>
</feature>
<feature type="binding site" evidence="1">
    <location>
        <position position="109"/>
    </location>
    <ligand>
        <name>anthranilate</name>
        <dbReference type="ChEBI" id="CHEBI:16567"/>
        <label>1</label>
    </ligand>
</feature>
<feature type="binding site" evidence="1">
    <location>
        <position position="118"/>
    </location>
    <ligand>
        <name>5-phospho-alpha-D-ribose 1-diphosphate</name>
        <dbReference type="ChEBI" id="CHEBI:58017"/>
    </ligand>
</feature>
<feature type="binding site" evidence="1">
    <location>
        <position position="163"/>
    </location>
    <ligand>
        <name>anthranilate</name>
        <dbReference type="ChEBI" id="CHEBI:16567"/>
        <label>2</label>
    </ligand>
</feature>
<feature type="binding site" evidence="1">
    <location>
        <position position="222"/>
    </location>
    <ligand>
        <name>Mg(2+)</name>
        <dbReference type="ChEBI" id="CHEBI:18420"/>
        <label>2</label>
    </ligand>
</feature>
<feature type="binding site" evidence="1">
    <location>
        <position position="223"/>
    </location>
    <ligand>
        <name>Mg(2+)</name>
        <dbReference type="ChEBI" id="CHEBI:18420"/>
        <label>1</label>
    </ligand>
</feature>
<feature type="binding site" evidence="1">
    <location>
        <position position="223"/>
    </location>
    <ligand>
        <name>Mg(2+)</name>
        <dbReference type="ChEBI" id="CHEBI:18420"/>
        <label>2</label>
    </ligand>
</feature>
<comment type="function">
    <text evidence="1">Catalyzes the transfer of the phosphoribosyl group of 5-phosphorylribose-1-pyrophosphate (PRPP) to anthranilate to yield N-(5'-phosphoribosyl)-anthranilate (PRA).</text>
</comment>
<comment type="catalytic activity">
    <reaction evidence="1">
        <text>N-(5-phospho-beta-D-ribosyl)anthranilate + diphosphate = 5-phospho-alpha-D-ribose 1-diphosphate + anthranilate</text>
        <dbReference type="Rhea" id="RHEA:11768"/>
        <dbReference type="ChEBI" id="CHEBI:16567"/>
        <dbReference type="ChEBI" id="CHEBI:18277"/>
        <dbReference type="ChEBI" id="CHEBI:33019"/>
        <dbReference type="ChEBI" id="CHEBI:58017"/>
        <dbReference type="EC" id="2.4.2.18"/>
    </reaction>
</comment>
<comment type="cofactor">
    <cofactor evidence="1">
        <name>Mg(2+)</name>
        <dbReference type="ChEBI" id="CHEBI:18420"/>
    </cofactor>
    <text evidence="1">Binds 2 magnesium ions per monomer.</text>
</comment>
<comment type="pathway">
    <text evidence="1">Amino-acid biosynthesis; L-tryptophan biosynthesis; L-tryptophan from chorismate: step 2/5.</text>
</comment>
<comment type="subunit">
    <text evidence="1">Homodimer.</text>
</comment>
<comment type="similarity">
    <text evidence="1">Belongs to the anthranilate phosphoribosyltransferase family.</text>
</comment>
<gene>
    <name evidence="1" type="primary">trpD</name>
    <name type="ordered locus">SSP1377</name>
</gene>
<evidence type="ECO:0000255" key="1">
    <source>
        <dbReference type="HAMAP-Rule" id="MF_00211"/>
    </source>
</evidence>
<proteinExistence type="inferred from homology"/>
<sequence length="338" mass="37035">MELQAQLKQYKPLNQQQMNEFIELLIADDISNEIKANLLSSFSEKEITQEELTYISKSLIHSMYRQQPYYPNSMCVCGTGGDKSNSFNISTTVSFVIASANIPVIKHGNKSVTSSSGSTDLLEAMGINTSSVEATPSQLNQVGLAFLSATDTYPIMKSIQPIRKMMTNPTIFNITGPIINPFKLDYQVMGVYETSKLEKIAQTLKDLGRKKAIVVYGANGMDEATLSGDNMIYEVNENEATKNYTVNPKDVGLAYAPNEALIGGTPLENLEITKNILTGVDRSAKRDVVVFNAGIALYVAEKVSSIKQGVIEAQRLIDNGNAIAQYNKMGGMTYDYIG</sequence>